<protein>
    <recommendedName>
        <fullName evidence="1">Glucans biosynthesis protein C</fullName>
        <ecNumber evidence="1">2.1.-.-</ecNumber>
    </recommendedName>
</protein>
<dbReference type="EC" id="2.1.-.-" evidence="1"/>
<dbReference type="EMBL" id="CU928163">
    <property type="protein sequence ID" value="CAR12430.1"/>
    <property type="molecule type" value="Genomic_DNA"/>
</dbReference>
<dbReference type="RefSeq" id="WP_001070356.1">
    <property type="nucleotide sequence ID" value="NC_011751.1"/>
</dbReference>
<dbReference type="RefSeq" id="YP_002411974.1">
    <property type="nucleotide sequence ID" value="NC_011751.1"/>
</dbReference>
<dbReference type="STRING" id="585056.ECUMN_1221"/>
<dbReference type="KEGG" id="eum:ECUMN_1221"/>
<dbReference type="PATRIC" id="fig|585056.7.peg.1423"/>
<dbReference type="HOGENOM" id="CLU_036182_2_0_6"/>
<dbReference type="UniPathway" id="UPA00637"/>
<dbReference type="Proteomes" id="UP000007097">
    <property type="component" value="Chromosome"/>
</dbReference>
<dbReference type="GO" id="GO:0005886">
    <property type="term" value="C:plasma membrane"/>
    <property type="evidence" value="ECO:0007669"/>
    <property type="project" value="UniProtKB-SubCell"/>
</dbReference>
<dbReference type="GO" id="GO:0016747">
    <property type="term" value="F:acyltransferase activity, transferring groups other than amino-acyl groups"/>
    <property type="evidence" value="ECO:0007669"/>
    <property type="project" value="InterPro"/>
</dbReference>
<dbReference type="GO" id="GO:0016741">
    <property type="term" value="F:transferase activity, transferring one-carbon groups"/>
    <property type="evidence" value="ECO:0007669"/>
    <property type="project" value="UniProtKB-UniRule"/>
</dbReference>
<dbReference type="GO" id="GO:0009250">
    <property type="term" value="P:glucan biosynthetic process"/>
    <property type="evidence" value="ECO:0007669"/>
    <property type="project" value="UniProtKB-UniRule"/>
</dbReference>
<dbReference type="HAMAP" id="MF_01066">
    <property type="entry name" value="MdoC_OpgC"/>
    <property type="match status" value="1"/>
</dbReference>
<dbReference type="InterPro" id="IPR002656">
    <property type="entry name" value="Acyl_transf_3_dom"/>
</dbReference>
<dbReference type="InterPro" id="IPR050623">
    <property type="entry name" value="Glucan_succinyl_AcylTrfase"/>
</dbReference>
<dbReference type="InterPro" id="IPR023723">
    <property type="entry name" value="Glucans_biosynth_C"/>
</dbReference>
<dbReference type="NCBIfam" id="NF003014">
    <property type="entry name" value="PRK03854.1"/>
    <property type="match status" value="1"/>
</dbReference>
<dbReference type="PANTHER" id="PTHR36927">
    <property type="entry name" value="BLR4337 PROTEIN"/>
    <property type="match status" value="1"/>
</dbReference>
<dbReference type="PANTHER" id="PTHR36927:SF3">
    <property type="entry name" value="GLUCANS BIOSYNTHESIS PROTEIN C"/>
    <property type="match status" value="1"/>
</dbReference>
<dbReference type="Pfam" id="PF01757">
    <property type="entry name" value="Acyl_transf_3"/>
    <property type="match status" value="1"/>
</dbReference>
<name>OPGC_ECOLU</name>
<organism>
    <name type="scientific">Escherichia coli O17:K52:H18 (strain UMN026 / ExPEC)</name>
    <dbReference type="NCBI Taxonomy" id="585056"/>
    <lineage>
        <taxon>Bacteria</taxon>
        <taxon>Pseudomonadati</taxon>
        <taxon>Pseudomonadota</taxon>
        <taxon>Gammaproteobacteria</taxon>
        <taxon>Enterobacterales</taxon>
        <taxon>Enterobacteriaceae</taxon>
        <taxon>Escherichia</taxon>
    </lineage>
</organism>
<keyword id="KW-0012">Acyltransferase</keyword>
<keyword id="KW-1003">Cell membrane</keyword>
<keyword id="KW-0472">Membrane</keyword>
<keyword id="KW-0808">Transferase</keyword>
<keyword id="KW-0812">Transmembrane</keyword>
<keyword id="KW-1133">Transmembrane helix</keyword>
<proteinExistence type="inferred from homology"/>
<reference key="1">
    <citation type="journal article" date="2009" name="PLoS Genet.">
        <title>Organised genome dynamics in the Escherichia coli species results in highly diverse adaptive paths.</title>
        <authorList>
            <person name="Touchon M."/>
            <person name="Hoede C."/>
            <person name="Tenaillon O."/>
            <person name="Barbe V."/>
            <person name="Baeriswyl S."/>
            <person name="Bidet P."/>
            <person name="Bingen E."/>
            <person name="Bonacorsi S."/>
            <person name="Bouchier C."/>
            <person name="Bouvet O."/>
            <person name="Calteau A."/>
            <person name="Chiapello H."/>
            <person name="Clermont O."/>
            <person name="Cruveiller S."/>
            <person name="Danchin A."/>
            <person name="Diard M."/>
            <person name="Dossat C."/>
            <person name="Karoui M.E."/>
            <person name="Frapy E."/>
            <person name="Garry L."/>
            <person name="Ghigo J.M."/>
            <person name="Gilles A.M."/>
            <person name="Johnson J."/>
            <person name="Le Bouguenec C."/>
            <person name="Lescat M."/>
            <person name="Mangenot S."/>
            <person name="Martinez-Jehanne V."/>
            <person name="Matic I."/>
            <person name="Nassif X."/>
            <person name="Oztas S."/>
            <person name="Petit M.A."/>
            <person name="Pichon C."/>
            <person name="Rouy Z."/>
            <person name="Ruf C.S."/>
            <person name="Schneider D."/>
            <person name="Tourret J."/>
            <person name="Vacherie B."/>
            <person name="Vallenet D."/>
            <person name="Medigue C."/>
            <person name="Rocha E.P.C."/>
            <person name="Denamur E."/>
        </authorList>
    </citation>
    <scope>NUCLEOTIDE SEQUENCE [LARGE SCALE GENOMIC DNA]</scope>
    <source>
        <strain>UMN026 / ExPEC</strain>
    </source>
</reference>
<comment type="function">
    <text evidence="1">Necessary for the succinyl substitution of periplasmic glucans. Could catalyze the transfer of succinyl residues from the cytoplasmic side of the membrane to the nascent glucan backbones on the periplasmic side of the membrane.</text>
</comment>
<comment type="pathway">
    <text evidence="1">Glycan metabolism; osmoregulated periplasmic glucan (OPG) biosynthesis.</text>
</comment>
<comment type="subcellular location">
    <subcellularLocation>
        <location evidence="1">Cell membrane</location>
        <topology evidence="1">Multi-pass membrane protein</topology>
    </subcellularLocation>
</comment>
<comment type="similarity">
    <text evidence="1">Belongs to the acyltransferase 3 family. OpgC subfamily.</text>
</comment>
<accession>B7NAS2</accession>
<feature type="chain" id="PRO_1000136567" description="Glucans biosynthesis protein C">
    <location>
        <begin position="1"/>
        <end position="385"/>
    </location>
</feature>
<feature type="transmembrane region" description="Helical" evidence="1">
    <location>
        <begin position="17"/>
        <end position="37"/>
    </location>
</feature>
<feature type="transmembrane region" description="Helical" evidence="1">
    <location>
        <begin position="60"/>
        <end position="80"/>
    </location>
</feature>
<feature type="transmembrane region" description="Helical" evidence="1">
    <location>
        <begin position="91"/>
        <end position="111"/>
    </location>
</feature>
<feature type="transmembrane region" description="Helical" evidence="1">
    <location>
        <begin position="137"/>
        <end position="157"/>
    </location>
</feature>
<feature type="transmembrane region" description="Helical" evidence="1">
    <location>
        <begin position="173"/>
        <end position="193"/>
    </location>
</feature>
<feature type="transmembrane region" description="Helical" evidence="1">
    <location>
        <begin position="212"/>
        <end position="232"/>
    </location>
</feature>
<feature type="transmembrane region" description="Helical" evidence="1">
    <location>
        <begin position="239"/>
        <end position="259"/>
    </location>
</feature>
<feature type="transmembrane region" description="Helical" evidence="1">
    <location>
        <begin position="274"/>
        <end position="294"/>
    </location>
</feature>
<feature type="transmembrane region" description="Helical" evidence="1">
    <location>
        <begin position="311"/>
        <end position="331"/>
    </location>
</feature>
<feature type="transmembrane region" description="Helical" evidence="1">
    <location>
        <begin position="338"/>
        <end position="358"/>
    </location>
</feature>
<gene>
    <name evidence="1" type="primary">mdoC</name>
    <name evidence="1" type="synonym">opgC</name>
    <name type="ordered locus">ECUMN_1221</name>
</gene>
<sequence length="385" mass="44730">MNPVPAQREYFLDSIRAWLMLLGIPFHISLIYSSHTWHVNSAEPSLWLTLFNDFIHSFRMQVFFVISGYFSYMLFLRYPLKKWWKVRVERVGIPMLTAIPLLTLPQFIMLQYVKGKAESWPGLSLYDKYNTLAWELISHLWFLLVLVVMTTLCVWIFKRIRNNLENSDKTNKKFSMVKLSVIFLCLGIGYAVIRRTIFIVYPPILSNGMFNFIVMQTLFYLPFFILGALAFIFPHLKTLFTTPSRGCTLAAALAFVAYLLNQRYGSGDAWMYETESVITMVLGLWMVNVVFSFGHRLLNFQSARVTYFVNASLFIYLVHHPLTLFFGAYITPHITSNWLGFLCGLIFVVGIAIILYEIHLRIPLLKFLFSGKPVVKRENDKAPAR</sequence>
<evidence type="ECO:0000255" key="1">
    <source>
        <dbReference type="HAMAP-Rule" id="MF_01066"/>
    </source>
</evidence>